<name>PXPA_BURA4</name>
<accession>B1YPC1</accession>
<gene>
    <name evidence="1" type="primary">pxpA</name>
    <name type="ordered locus">BamMC406_2950</name>
</gene>
<feature type="chain" id="PRO_1000132042" description="5-oxoprolinase subunit A">
    <location>
        <begin position="1"/>
        <end position="254"/>
    </location>
</feature>
<protein>
    <recommendedName>
        <fullName evidence="1">5-oxoprolinase subunit A</fullName>
        <shortName evidence="1">5-OPase subunit A</shortName>
        <ecNumber evidence="1">3.5.2.9</ecNumber>
    </recommendedName>
    <alternativeName>
        <fullName evidence="1">5-oxoprolinase (ATP-hydrolyzing) subunit A</fullName>
    </alternativeName>
</protein>
<dbReference type="EC" id="3.5.2.9" evidence="1"/>
<dbReference type="EMBL" id="CP001025">
    <property type="protein sequence ID" value="ACB65426.1"/>
    <property type="molecule type" value="Genomic_DNA"/>
</dbReference>
<dbReference type="RefSeq" id="WP_011658155.1">
    <property type="nucleotide sequence ID" value="NC_010551.1"/>
</dbReference>
<dbReference type="SMR" id="B1YPC1"/>
<dbReference type="GeneID" id="93084715"/>
<dbReference type="KEGG" id="bac:BamMC406_2950"/>
<dbReference type="HOGENOM" id="CLU_069535_0_0_4"/>
<dbReference type="OrthoDB" id="9773478at2"/>
<dbReference type="Proteomes" id="UP000001680">
    <property type="component" value="Chromosome 1"/>
</dbReference>
<dbReference type="GO" id="GO:0017168">
    <property type="term" value="F:5-oxoprolinase (ATP-hydrolyzing) activity"/>
    <property type="evidence" value="ECO:0007669"/>
    <property type="project" value="UniProtKB-UniRule"/>
</dbReference>
<dbReference type="GO" id="GO:0005524">
    <property type="term" value="F:ATP binding"/>
    <property type="evidence" value="ECO:0007669"/>
    <property type="project" value="UniProtKB-UniRule"/>
</dbReference>
<dbReference type="GO" id="GO:0005975">
    <property type="term" value="P:carbohydrate metabolic process"/>
    <property type="evidence" value="ECO:0007669"/>
    <property type="project" value="InterPro"/>
</dbReference>
<dbReference type="CDD" id="cd10800">
    <property type="entry name" value="LamB_YcsF_YbgL_like"/>
    <property type="match status" value="1"/>
</dbReference>
<dbReference type="Gene3D" id="3.20.20.370">
    <property type="entry name" value="Glycoside hydrolase/deacetylase"/>
    <property type="match status" value="1"/>
</dbReference>
<dbReference type="HAMAP" id="MF_00691">
    <property type="entry name" value="PxpA"/>
    <property type="match status" value="1"/>
</dbReference>
<dbReference type="InterPro" id="IPR011330">
    <property type="entry name" value="Glyco_hydro/deAcase_b/a-brl"/>
</dbReference>
<dbReference type="InterPro" id="IPR005501">
    <property type="entry name" value="LamB/YcsF/PxpA-like"/>
</dbReference>
<dbReference type="NCBIfam" id="NF003814">
    <property type="entry name" value="PRK05406.1-3"/>
    <property type="match status" value="1"/>
</dbReference>
<dbReference type="NCBIfam" id="NF003815">
    <property type="entry name" value="PRK05406.1-4"/>
    <property type="match status" value="1"/>
</dbReference>
<dbReference type="NCBIfam" id="NF003816">
    <property type="entry name" value="PRK05406.1-5"/>
    <property type="match status" value="1"/>
</dbReference>
<dbReference type="PANTHER" id="PTHR30292:SF0">
    <property type="entry name" value="5-OXOPROLINASE SUBUNIT A"/>
    <property type="match status" value="1"/>
</dbReference>
<dbReference type="PANTHER" id="PTHR30292">
    <property type="entry name" value="UNCHARACTERIZED PROTEIN YBGL-RELATED"/>
    <property type="match status" value="1"/>
</dbReference>
<dbReference type="Pfam" id="PF03746">
    <property type="entry name" value="LamB_YcsF"/>
    <property type="match status" value="1"/>
</dbReference>
<dbReference type="SUPFAM" id="SSF88713">
    <property type="entry name" value="Glycoside hydrolase/deacetylase"/>
    <property type="match status" value="1"/>
</dbReference>
<sequence length="254" mass="26545">MEIDLNADLGEGCGSDEALLDLVTSANIACGWHAGGANAMRDCVRWAVQKGVSIGAHPSFHDPENFGRKEMQLPAGDIYAGVLYQLGALSAIAQAEGGRIAHVKPHGALYNQAARDPLIADAVVSAIHDFDPSLAVFGLANSVFVAAARHAGLAAVEEVFADRGYRADGSLVPRSQPGALIDDENAVLARTLDMVRERKVRAVSGEWVPLNAQTVCLHGDGPHALAFAKRIRTALEAAGVDVVAPGALQADEDA</sequence>
<evidence type="ECO:0000255" key="1">
    <source>
        <dbReference type="HAMAP-Rule" id="MF_00691"/>
    </source>
</evidence>
<organism>
    <name type="scientific">Burkholderia ambifaria (strain MC40-6)</name>
    <dbReference type="NCBI Taxonomy" id="398577"/>
    <lineage>
        <taxon>Bacteria</taxon>
        <taxon>Pseudomonadati</taxon>
        <taxon>Pseudomonadota</taxon>
        <taxon>Betaproteobacteria</taxon>
        <taxon>Burkholderiales</taxon>
        <taxon>Burkholderiaceae</taxon>
        <taxon>Burkholderia</taxon>
        <taxon>Burkholderia cepacia complex</taxon>
    </lineage>
</organism>
<proteinExistence type="inferred from homology"/>
<keyword id="KW-0067">ATP-binding</keyword>
<keyword id="KW-0378">Hydrolase</keyword>
<keyword id="KW-0547">Nucleotide-binding</keyword>
<comment type="function">
    <text evidence="1">Catalyzes the cleavage of 5-oxoproline to form L-glutamate coupled to the hydrolysis of ATP to ADP and inorganic phosphate.</text>
</comment>
<comment type="catalytic activity">
    <reaction evidence="1">
        <text>5-oxo-L-proline + ATP + 2 H2O = L-glutamate + ADP + phosphate + H(+)</text>
        <dbReference type="Rhea" id="RHEA:10348"/>
        <dbReference type="ChEBI" id="CHEBI:15377"/>
        <dbReference type="ChEBI" id="CHEBI:15378"/>
        <dbReference type="ChEBI" id="CHEBI:29985"/>
        <dbReference type="ChEBI" id="CHEBI:30616"/>
        <dbReference type="ChEBI" id="CHEBI:43474"/>
        <dbReference type="ChEBI" id="CHEBI:58402"/>
        <dbReference type="ChEBI" id="CHEBI:456216"/>
        <dbReference type="EC" id="3.5.2.9"/>
    </reaction>
</comment>
<comment type="subunit">
    <text evidence="1">Forms a complex composed of PxpA, PxpB and PxpC.</text>
</comment>
<comment type="similarity">
    <text evidence="1">Belongs to the LamB/PxpA family.</text>
</comment>
<reference key="1">
    <citation type="submission" date="2008-04" db="EMBL/GenBank/DDBJ databases">
        <title>Complete sequence of chromosome 1 of Burkholderia ambifaria MC40-6.</title>
        <authorList>
            <person name="Copeland A."/>
            <person name="Lucas S."/>
            <person name="Lapidus A."/>
            <person name="Glavina del Rio T."/>
            <person name="Dalin E."/>
            <person name="Tice H."/>
            <person name="Pitluck S."/>
            <person name="Chain P."/>
            <person name="Malfatti S."/>
            <person name="Shin M."/>
            <person name="Vergez L."/>
            <person name="Lang D."/>
            <person name="Schmutz J."/>
            <person name="Larimer F."/>
            <person name="Land M."/>
            <person name="Hauser L."/>
            <person name="Kyrpides N."/>
            <person name="Lykidis A."/>
            <person name="Ramette A."/>
            <person name="Konstantinidis K."/>
            <person name="Tiedje J."/>
            <person name="Richardson P."/>
        </authorList>
    </citation>
    <scope>NUCLEOTIDE SEQUENCE [LARGE SCALE GENOMIC DNA]</scope>
    <source>
        <strain>MC40-6</strain>
    </source>
</reference>